<accession>A5EV43</accession>
<feature type="chain" id="PRO_1000101274" description="Glycine--tRNA ligase beta subunit">
    <location>
        <begin position="1"/>
        <end position="689"/>
    </location>
</feature>
<gene>
    <name evidence="1" type="primary">glyS</name>
    <name type="ordered locus">DNO_0702</name>
</gene>
<organism>
    <name type="scientific">Dichelobacter nodosus (strain VCS1703A)</name>
    <dbReference type="NCBI Taxonomy" id="246195"/>
    <lineage>
        <taxon>Bacteria</taxon>
        <taxon>Pseudomonadati</taxon>
        <taxon>Pseudomonadota</taxon>
        <taxon>Gammaproteobacteria</taxon>
        <taxon>Cardiobacteriales</taxon>
        <taxon>Cardiobacteriaceae</taxon>
        <taxon>Dichelobacter</taxon>
    </lineage>
</organism>
<sequence>MNTVTLLIEIGTEELPTRAVTELASAGAQLWDNVLTTALIPHGEIEAFGTPRRLAWRVRQLAVKQTDQKIERKGPSLQAAKDKNNAWTKAALGFAASCGVDVEQLAIETTEKGQWLIFRGEKMGENVADLLPDLFAEVMDKLPIAKRMRWGDCDHAFVRPVHNLLVLADDNVWDLEFFGVASQHLSQGHRVHHAEPVAIRHAKTYEADLEAAYVIVDHETRCNRIREQVQALARDLGGKALMPEALVKEVASLTEWPIAIAGAFDRSFLKMPPEVLITTMQDHQKTFAVMDTLGTLLPYFIAVANLESRNEEEVRKGNEKVIRPRFADAEFFWQQDLKRPLEDYLPQLERVIYQEKLGTLAEKTRRVQTIACELTAMTAADKNSVYTAARLAKSDLQTAMVQEFPELQGVMGRYYALHQGLSAEVAQALEEQYFPTAAGDKLPQTAVGITLSIAEKLDTLIGGFSIGAQPTGSKDPYALRRMAIGLIRLLIEKKVPLLLTPWLEKAAGQFHDALGAKNFVMDVRAYILERLQAYYREQNIAPEIVQAVLALNGDNLVDIDQRVRALAPFSNSDAALSFFASAKRIRNILKKNGTQQTAVRTDLLQESAEKHLWQQWEQMHNALLAAVSAGNYETALQQLGSLAEPLEAFFAQVMVMTENPDVQINRLALLTALQKGFELIADLSIISNL</sequence>
<keyword id="KW-0030">Aminoacyl-tRNA synthetase</keyword>
<keyword id="KW-0067">ATP-binding</keyword>
<keyword id="KW-0963">Cytoplasm</keyword>
<keyword id="KW-0436">Ligase</keyword>
<keyword id="KW-0547">Nucleotide-binding</keyword>
<keyword id="KW-0648">Protein biosynthesis</keyword>
<keyword id="KW-1185">Reference proteome</keyword>
<comment type="catalytic activity">
    <reaction evidence="1">
        <text>tRNA(Gly) + glycine + ATP = glycyl-tRNA(Gly) + AMP + diphosphate</text>
        <dbReference type="Rhea" id="RHEA:16013"/>
        <dbReference type="Rhea" id="RHEA-COMP:9664"/>
        <dbReference type="Rhea" id="RHEA-COMP:9683"/>
        <dbReference type="ChEBI" id="CHEBI:30616"/>
        <dbReference type="ChEBI" id="CHEBI:33019"/>
        <dbReference type="ChEBI" id="CHEBI:57305"/>
        <dbReference type="ChEBI" id="CHEBI:78442"/>
        <dbReference type="ChEBI" id="CHEBI:78522"/>
        <dbReference type="ChEBI" id="CHEBI:456215"/>
        <dbReference type="EC" id="6.1.1.14"/>
    </reaction>
</comment>
<comment type="subunit">
    <text evidence="1">Tetramer of two alpha and two beta subunits.</text>
</comment>
<comment type="subcellular location">
    <subcellularLocation>
        <location evidence="1">Cytoplasm</location>
    </subcellularLocation>
</comment>
<comment type="similarity">
    <text evidence="1">Belongs to the class-II aminoacyl-tRNA synthetase family.</text>
</comment>
<proteinExistence type="inferred from homology"/>
<name>SYGB_DICNV</name>
<evidence type="ECO:0000255" key="1">
    <source>
        <dbReference type="HAMAP-Rule" id="MF_00255"/>
    </source>
</evidence>
<dbReference type="EC" id="6.1.1.14" evidence="1"/>
<dbReference type="EMBL" id="CP000513">
    <property type="protein sequence ID" value="ABQ13623.1"/>
    <property type="molecule type" value="Genomic_DNA"/>
</dbReference>
<dbReference type="RefSeq" id="WP_012031035.1">
    <property type="nucleotide sequence ID" value="NC_009446.1"/>
</dbReference>
<dbReference type="SMR" id="A5EV43"/>
<dbReference type="STRING" id="246195.DNO_0702"/>
<dbReference type="KEGG" id="dno:DNO_0702"/>
<dbReference type="eggNOG" id="COG0751">
    <property type="taxonomic scope" value="Bacteria"/>
</dbReference>
<dbReference type="HOGENOM" id="CLU_007220_2_2_6"/>
<dbReference type="OrthoDB" id="9775440at2"/>
<dbReference type="Proteomes" id="UP000000248">
    <property type="component" value="Chromosome"/>
</dbReference>
<dbReference type="GO" id="GO:0005829">
    <property type="term" value="C:cytosol"/>
    <property type="evidence" value="ECO:0007669"/>
    <property type="project" value="TreeGrafter"/>
</dbReference>
<dbReference type="GO" id="GO:0004814">
    <property type="term" value="F:arginine-tRNA ligase activity"/>
    <property type="evidence" value="ECO:0007669"/>
    <property type="project" value="InterPro"/>
</dbReference>
<dbReference type="GO" id="GO:0005524">
    <property type="term" value="F:ATP binding"/>
    <property type="evidence" value="ECO:0007669"/>
    <property type="project" value="UniProtKB-UniRule"/>
</dbReference>
<dbReference type="GO" id="GO:0004820">
    <property type="term" value="F:glycine-tRNA ligase activity"/>
    <property type="evidence" value="ECO:0007669"/>
    <property type="project" value="UniProtKB-UniRule"/>
</dbReference>
<dbReference type="GO" id="GO:0006420">
    <property type="term" value="P:arginyl-tRNA aminoacylation"/>
    <property type="evidence" value="ECO:0007669"/>
    <property type="project" value="InterPro"/>
</dbReference>
<dbReference type="GO" id="GO:0006426">
    <property type="term" value="P:glycyl-tRNA aminoacylation"/>
    <property type="evidence" value="ECO:0007669"/>
    <property type="project" value="UniProtKB-UniRule"/>
</dbReference>
<dbReference type="Gene3D" id="1.10.730.10">
    <property type="entry name" value="Isoleucyl-tRNA Synthetase, Domain 1"/>
    <property type="match status" value="1"/>
</dbReference>
<dbReference type="HAMAP" id="MF_00255">
    <property type="entry name" value="Gly_tRNA_synth_beta"/>
    <property type="match status" value="1"/>
</dbReference>
<dbReference type="InterPro" id="IPR008909">
    <property type="entry name" value="DALR_anticod-bd"/>
</dbReference>
<dbReference type="InterPro" id="IPR015944">
    <property type="entry name" value="Gly-tRNA-synth_bsu"/>
</dbReference>
<dbReference type="InterPro" id="IPR006194">
    <property type="entry name" value="Gly-tRNA-synth_heterodimer"/>
</dbReference>
<dbReference type="NCBIfam" id="TIGR00211">
    <property type="entry name" value="glyS"/>
    <property type="match status" value="1"/>
</dbReference>
<dbReference type="PANTHER" id="PTHR30075:SF2">
    <property type="entry name" value="GLYCINE--TRNA LIGASE, CHLOROPLASTIC_MITOCHONDRIAL 2"/>
    <property type="match status" value="1"/>
</dbReference>
<dbReference type="PANTHER" id="PTHR30075">
    <property type="entry name" value="GLYCYL-TRNA SYNTHETASE"/>
    <property type="match status" value="1"/>
</dbReference>
<dbReference type="Pfam" id="PF05746">
    <property type="entry name" value="DALR_1"/>
    <property type="match status" value="1"/>
</dbReference>
<dbReference type="Pfam" id="PF02092">
    <property type="entry name" value="tRNA_synt_2f"/>
    <property type="match status" value="1"/>
</dbReference>
<dbReference type="PRINTS" id="PR01045">
    <property type="entry name" value="TRNASYNTHGB"/>
</dbReference>
<dbReference type="SMART" id="SM00836">
    <property type="entry name" value="DALR_1"/>
    <property type="match status" value="1"/>
</dbReference>
<dbReference type="SUPFAM" id="SSF109604">
    <property type="entry name" value="HD-domain/PDEase-like"/>
    <property type="match status" value="1"/>
</dbReference>
<dbReference type="PROSITE" id="PS50861">
    <property type="entry name" value="AA_TRNA_LIGASE_II_GLYAB"/>
    <property type="match status" value="1"/>
</dbReference>
<protein>
    <recommendedName>
        <fullName evidence="1">Glycine--tRNA ligase beta subunit</fullName>
        <ecNumber evidence="1">6.1.1.14</ecNumber>
    </recommendedName>
    <alternativeName>
        <fullName evidence="1">Glycyl-tRNA synthetase beta subunit</fullName>
        <shortName evidence="1">GlyRS</shortName>
    </alternativeName>
</protein>
<reference key="1">
    <citation type="journal article" date="2007" name="Nat. Biotechnol.">
        <title>Genome sequence and identification of candidate vaccine antigens from the animal pathogen Dichelobacter nodosus.</title>
        <authorList>
            <person name="Myers G.S.A."/>
            <person name="Parker D."/>
            <person name="Al-Hasani K."/>
            <person name="Kennan R.M."/>
            <person name="Seemann T."/>
            <person name="Ren Q."/>
            <person name="Badger J.H."/>
            <person name="Selengut J.D."/>
            <person name="Deboy R.T."/>
            <person name="Tettelin H."/>
            <person name="Boyce J.D."/>
            <person name="McCarl V.P."/>
            <person name="Han X."/>
            <person name="Nelson W.C."/>
            <person name="Madupu R."/>
            <person name="Mohamoud Y."/>
            <person name="Holley T."/>
            <person name="Fedorova N."/>
            <person name="Khouri H."/>
            <person name="Bottomley S.P."/>
            <person name="Whittington R.J."/>
            <person name="Adler B."/>
            <person name="Songer J.G."/>
            <person name="Rood J.I."/>
            <person name="Paulsen I.T."/>
        </authorList>
    </citation>
    <scope>NUCLEOTIDE SEQUENCE [LARGE SCALE GENOMIC DNA]</scope>
    <source>
        <strain>VCS1703A</strain>
    </source>
</reference>